<proteinExistence type="inferred from homology"/>
<gene>
    <name evidence="1" type="primary">hemE</name>
    <name type="ordered locus">Sfri_0482</name>
</gene>
<protein>
    <recommendedName>
        <fullName evidence="1">Uroporphyrinogen decarboxylase</fullName>
        <shortName evidence="1">UPD</shortName>
        <shortName evidence="1">URO-D</shortName>
        <ecNumber evidence="1">4.1.1.37</ecNumber>
    </recommendedName>
</protein>
<reference key="1">
    <citation type="submission" date="2006-08" db="EMBL/GenBank/DDBJ databases">
        <title>Complete sequence of Shewanella frigidimarina NCIMB 400.</title>
        <authorList>
            <consortium name="US DOE Joint Genome Institute"/>
            <person name="Copeland A."/>
            <person name="Lucas S."/>
            <person name="Lapidus A."/>
            <person name="Barry K."/>
            <person name="Detter J.C."/>
            <person name="Glavina del Rio T."/>
            <person name="Hammon N."/>
            <person name="Israni S."/>
            <person name="Dalin E."/>
            <person name="Tice H."/>
            <person name="Pitluck S."/>
            <person name="Fredrickson J.K."/>
            <person name="Kolker E."/>
            <person name="McCuel L.A."/>
            <person name="DiChristina T."/>
            <person name="Nealson K.H."/>
            <person name="Newman D."/>
            <person name="Tiedje J.M."/>
            <person name="Zhou J."/>
            <person name="Romine M.F."/>
            <person name="Culley D.E."/>
            <person name="Serres M."/>
            <person name="Chertkov O."/>
            <person name="Brettin T."/>
            <person name="Bruce D."/>
            <person name="Han C."/>
            <person name="Tapia R."/>
            <person name="Gilna P."/>
            <person name="Schmutz J."/>
            <person name="Larimer F."/>
            <person name="Land M."/>
            <person name="Hauser L."/>
            <person name="Kyrpides N."/>
            <person name="Mikhailova N."/>
            <person name="Richardson P."/>
        </authorList>
    </citation>
    <scope>NUCLEOTIDE SEQUENCE [LARGE SCALE GENOMIC DNA]</scope>
    <source>
        <strain>NCIMB 400</strain>
    </source>
</reference>
<feature type="chain" id="PRO_1000023970" description="Uroporphyrinogen decarboxylase">
    <location>
        <begin position="1"/>
        <end position="354"/>
    </location>
</feature>
<feature type="binding site" evidence="1">
    <location>
        <begin position="27"/>
        <end position="31"/>
    </location>
    <ligand>
        <name>substrate</name>
    </ligand>
</feature>
<feature type="binding site" evidence="1">
    <location>
        <position position="77"/>
    </location>
    <ligand>
        <name>substrate</name>
    </ligand>
</feature>
<feature type="binding site" evidence="1">
    <location>
        <position position="154"/>
    </location>
    <ligand>
        <name>substrate</name>
    </ligand>
</feature>
<feature type="binding site" evidence="1">
    <location>
        <position position="209"/>
    </location>
    <ligand>
        <name>substrate</name>
    </ligand>
</feature>
<feature type="binding site" evidence="1">
    <location>
        <position position="327"/>
    </location>
    <ligand>
        <name>substrate</name>
    </ligand>
</feature>
<feature type="site" description="Transition state stabilizer" evidence="1">
    <location>
        <position position="77"/>
    </location>
</feature>
<accession>Q088H1</accession>
<sequence length="354" mass="39392">MAELKNDRYLRALLKQPVDVTPVWMMRQAGRYLPEYKEVRAQAGDFMSLCRNAELACEVTLQPLRRYDLDAAILFSDILTVPDAMGLGLYFEAGEGPRFERPTDTIDAIKKLCIPDPEDELGYVMRAVSTIRRELNGSVPLIGFSGSPWTLATYMVEGGSSKTFEKIKRMAYAEPAALHMLLDKLADSVVLYLNAQVANGVQSLMIFDSWGGALSHHAYREFSLRYMQKIVDGLTRFADGRKVPVTLFTKGGGLWLESMAETGCDALGLDWTVDIGDARRRVGHKVALQGNMDPSMLYATPERIHQEVDQILASYGEGTGHVFNLGHGIHQHVDPEHAGAFINSVHELSGKYHK</sequence>
<organism>
    <name type="scientific">Shewanella frigidimarina (strain NCIMB 400)</name>
    <dbReference type="NCBI Taxonomy" id="318167"/>
    <lineage>
        <taxon>Bacteria</taxon>
        <taxon>Pseudomonadati</taxon>
        <taxon>Pseudomonadota</taxon>
        <taxon>Gammaproteobacteria</taxon>
        <taxon>Alteromonadales</taxon>
        <taxon>Shewanellaceae</taxon>
        <taxon>Shewanella</taxon>
    </lineage>
</organism>
<comment type="function">
    <text evidence="1">Catalyzes the decarboxylation of four acetate groups of uroporphyrinogen-III to yield coproporphyrinogen-III.</text>
</comment>
<comment type="catalytic activity">
    <reaction evidence="1">
        <text>uroporphyrinogen III + 4 H(+) = coproporphyrinogen III + 4 CO2</text>
        <dbReference type="Rhea" id="RHEA:19865"/>
        <dbReference type="ChEBI" id="CHEBI:15378"/>
        <dbReference type="ChEBI" id="CHEBI:16526"/>
        <dbReference type="ChEBI" id="CHEBI:57308"/>
        <dbReference type="ChEBI" id="CHEBI:57309"/>
        <dbReference type="EC" id="4.1.1.37"/>
    </reaction>
</comment>
<comment type="pathway">
    <text evidence="1">Porphyrin-containing compound metabolism; protoporphyrin-IX biosynthesis; coproporphyrinogen-III from 5-aminolevulinate: step 4/4.</text>
</comment>
<comment type="subunit">
    <text evidence="1">Homodimer.</text>
</comment>
<comment type="subcellular location">
    <subcellularLocation>
        <location evidence="1">Cytoplasm</location>
    </subcellularLocation>
</comment>
<comment type="similarity">
    <text evidence="1">Belongs to the uroporphyrinogen decarboxylase family.</text>
</comment>
<keyword id="KW-0963">Cytoplasm</keyword>
<keyword id="KW-0210">Decarboxylase</keyword>
<keyword id="KW-0456">Lyase</keyword>
<keyword id="KW-0627">Porphyrin biosynthesis</keyword>
<keyword id="KW-1185">Reference proteome</keyword>
<name>DCUP_SHEFN</name>
<evidence type="ECO:0000255" key="1">
    <source>
        <dbReference type="HAMAP-Rule" id="MF_00218"/>
    </source>
</evidence>
<dbReference type="EC" id="4.1.1.37" evidence="1"/>
<dbReference type="EMBL" id="CP000447">
    <property type="protein sequence ID" value="ABI70344.1"/>
    <property type="molecule type" value="Genomic_DNA"/>
</dbReference>
<dbReference type="RefSeq" id="WP_011635971.1">
    <property type="nucleotide sequence ID" value="NC_008345.1"/>
</dbReference>
<dbReference type="SMR" id="Q088H1"/>
<dbReference type="STRING" id="318167.Sfri_0482"/>
<dbReference type="KEGG" id="sfr:Sfri_0482"/>
<dbReference type="eggNOG" id="COG0407">
    <property type="taxonomic scope" value="Bacteria"/>
</dbReference>
<dbReference type="HOGENOM" id="CLU_040933_0_0_6"/>
<dbReference type="OrthoDB" id="9806656at2"/>
<dbReference type="UniPathway" id="UPA00251">
    <property type="reaction ID" value="UER00321"/>
</dbReference>
<dbReference type="Proteomes" id="UP000000684">
    <property type="component" value="Chromosome"/>
</dbReference>
<dbReference type="GO" id="GO:0005829">
    <property type="term" value="C:cytosol"/>
    <property type="evidence" value="ECO:0007669"/>
    <property type="project" value="TreeGrafter"/>
</dbReference>
<dbReference type="GO" id="GO:0004853">
    <property type="term" value="F:uroporphyrinogen decarboxylase activity"/>
    <property type="evidence" value="ECO:0007669"/>
    <property type="project" value="UniProtKB-UniRule"/>
</dbReference>
<dbReference type="GO" id="GO:0019353">
    <property type="term" value="P:protoporphyrinogen IX biosynthetic process from glutamate"/>
    <property type="evidence" value="ECO:0007669"/>
    <property type="project" value="TreeGrafter"/>
</dbReference>
<dbReference type="CDD" id="cd00717">
    <property type="entry name" value="URO-D"/>
    <property type="match status" value="1"/>
</dbReference>
<dbReference type="FunFam" id="3.20.20.210:FF:000001">
    <property type="entry name" value="Uroporphyrinogen decarboxylase"/>
    <property type="match status" value="1"/>
</dbReference>
<dbReference type="Gene3D" id="3.20.20.210">
    <property type="match status" value="1"/>
</dbReference>
<dbReference type="HAMAP" id="MF_00218">
    <property type="entry name" value="URO_D"/>
    <property type="match status" value="1"/>
</dbReference>
<dbReference type="InterPro" id="IPR038071">
    <property type="entry name" value="UROD/MetE-like_sf"/>
</dbReference>
<dbReference type="InterPro" id="IPR006361">
    <property type="entry name" value="Uroporphyrinogen_deCO2ase_HemE"/>
</dbReference>
<dbReference type="InterPro" id="IPR000257">
    <property type="entry name" value="Uroporphyrinogen_deCOase"/>
</dbReference>
<dbReference type="NCBIfam" id="TIGR01464">
    <property type="entry name" value="hemE"/>
    <property type="match status" value="1"/>
</dbReference>
<dbReference type="PANTHER" id="PTHR21091">
    <property type="entry name" value="METHYLTETRAHYDROFOLATE:HOMOCYSTEINE METHYLTRANSFERASE RELATED"/>
    <property type="match status" value="1"/>
</dbReference>
<dbReference type="PANTHER" id="PTHR21091:SF169">
    <property type="entry name" value="UROPORPHYRINOGEN DECARBOXYLASE"/>
    <property type="match status" value="1"/>
</dbReference>
<dbReference type="Pfam" id="PF01208">
    <property type="entry name" value="URO-D"/>
    <property type="match status" value="1"/>
</dbReference>
<dbReference type="SUPFAM" id="SSF51726">
    <property type="entry name" value="UROD/MetE-like"/>
    <property type="match status" value="1"/>
</dbReference>
<dbReference type="PROSITE" id="PS00906">
    <property type="entry name" value="UROD_1"/>
    <property type="match status" value="1"/>
</dbReference>
<dbReference type="PROSITE" id="PS00907">
    <property type="entry name" value="UROD_2"/>
    <property type="match status" value="1"/>
</dbReference>